<reference key="1">
    <citation type="journal article" date="2006" name="Nature">
        <title>Human chromosome 11 DNA sequence and analysis including novel gene identification.</title>
        <authorList>
            <person name="Taylor T.D."/>
            <person name="Noguchi H."/>
            <person name="Totoki Y."/>
            <person name="Toyoda A."/>
            <person name="Kuroki Y."/>
            <person name="Dewar K."/>
            <person name="Lloyd C."/>
            <person name="Itoh T."/>
            <person name="Takeda T."/>
            <person name="Kim D.-W."/>
            <person name="She X."/>
            <person name="Barlow K.F."/>
            <person name="Bloom T."/>
            <person name="Bruford E."/>
            <person name="Chang J.L."/>
            <person name="Cuomo C.A."/>
            <person name="Eichler E."/>
            <person name="FitzGerald M.G."/>
            <person name="Jaffe D.B."/>
            <person name="LaButti K."/>
            <person name="Nicol R."/>
            <person name="Park H.-S."/>
            <person name="Seaman C."/>
            <person name="Sougnez C."/>
            <person name="Yang X."/>
            <person name="Zimmer A.R."/>
            <person name="Zody M.C."/>
            <person name="Birren B.W."/>
            <person name="Nusbaum C."/>
            <person name="Fujiyama A."/>
            <person name="Hattori M."/>
            <person name="Rogers J."/>
            <person name="Lander E.S."/>
            <person name="Sakaki Y."/>
        </authorList>
    </citation>
    <scope>NUCLEOTIDE SEQUENCE [LARGE SCALE GENOMIC DNA]</scope>
</reference>
<reference key="2">
    <citation type="journal article" date="2004" name="Genome Res.">
        <title>The status, quality, and expansion of the NIH full-length cDNA project: the Mammalian Gene Collection (MGC).</title>
        <authorList>
            <consortium name="The MGC Project Team"/>
        </authorList>
    </citation>
    <scope>NUCLEOTIDE SEQUENCE [LARGE SCALE MRNA] (ISOFORMS 1 AND 2)</scope>
    <scope>NUCLEOTIDE SEQUENCE [LARGE SCALE MRNA] OF 11-245 (ISOFORM 3)</scope>
    <scope>VARIANT ARG-195</scope>
    <source>
        <tissue>Adrenal cortex</tissue>
        <tissue>Brain</tissue>
        <tissue>Embryonic stem cell</tissue>
        <tissue>Pancreas</tissue>
    </source>
</reference>
<reference key="3">
    <citation type="submission" date="1998-06" db="EMBL/GenBank/DDBJ databases">
        <authorList>
            <person name="Zhang J.S.S."/>
            <person name="Reddel R.R."/>
        </authorList>
    </citation>
    <scope>NUCLEOTIDE SEQUENCE [MRNA] OF 22-292 (ISOFORM 2)</scope>
    <scope>VARIANT ARG-195</scope>
    <source>
        <tissue>Mesenchymal cell</tissue>
    </source>
</reference>
<reference key="4">
    <citation type="journal article" date="2011" name="BMC Syst. Biol.">
        <title>Initial characterization of the human central proteome.</title>
        <authorList>
            <person name="Burkard T.R."/>
            <person name="Planyavsky M."/>
            <person name="Kaupe I."/>
            <person name="Breitwieser F.P."/>
            <person name="Buerckstuemmer T."/>
            <person name="Bennett K.L."/>
            <person name="Superti-Furga G."/>
            <person name="Colinge J."/>
        </authorList>
    </citation>
    <scope>IDENTIFICATION BY MASS SPECTROMETRY [LARGE SCALE ANALYSIS]</scope>
</reference>
<reference key="5">
    <citation type="journal article" date="2014" name="Mol. Cell. Proteomics">
        <title>Immunoaffinity enrichment and mass spectrometry analysis of protein methylation.</title>
        <authorList>
            <person name="Guo A."/>
            <person name="Gu H."/>
            <person name="Zhou J."/>
            <person name="Mulhern D."/>
            <person name="Wang Y."/>
            <person name="Lee K.A."/>
            <person name="Yang V."/>
            <person name="Aguiar M."/>
            <person name="Kornhauser J."/>
            <person name="Jia X."/>
            <person name="Ren J."/>
            <person name="Beausoleil S.A."/>
            <person name="Silva J.C."/>
            <person name="Vemulapalli V."/>
            <person name="Bedford M.T."/>
            <person name="Comb M.J."/>
        </authorList>
    </citation>
    <scope>METHYLATION [LARGE SCALE ANALYSIS] AT ARG-29 (ISOFORMS 2 AND 3)</scope>
    <scope>IDENTIFICATION BY MASS SPECTROMETRY [LARGE SCALE ANALYSIS]</scope>
    <source>
        <tissue>Colon carcinoma</tissue>
    </source>
</reference>
<reference key="6">
    <citation type="journal article" date="2005" name="Acta Crystallogr. F">
        <title>The structure at 2.5 A resolution of human basophilic leukemia-expressed protein BLES03.</title>
        <authorList>
            <person name="Bitto E."/>
            <person name="Bingman C.A."/>
            <person name="Robinson H."/>
            <person name="Allard S.T.M."/>
            <person name="Wesenberg G.E."/>
            <person name="Phillips G.N. Jr."/>
        </authorList>
    </citation>
    <scope>X-RAY CRYSTALLOGRAPHY (2.5 ANGSTROMS) OF 42-292</scope>
</reference>
<reference key="7">
    <citation type="journal article" date="2007" name="Structure">
        <title>Ensemble refinement of protein crystal structures: validation and application.</title>
        <authorList>
            <person name="Levin E.J."/>
            <person name="Kondrashov D.A."/>
            <person name="Wesenberg G.E."/>
            <person name="Phillips G.N. Jr."/>
        </authorList>
    </citation>
    <scope>X-RAY CRYSTALLOGRAPHY (2.5 ANGSTROMS) OF 42-292</scope>
</reference>
<comment type="interaction">
    <interactant intactId="EBI-721765">
        <id>Q9H3H3</id>
    </interactant>
    <interactant intactId="EBI-748492">
        <id>Q15056</id>
        <label>EIF4H</label>
    </interactant>
    <organismsDiffer>false</organismsDiffer>
    <experiments>5</experiments>
</comment>
<comment type="interaction">
    <interactant intactId="EBI-721765">
        <id>Q9H3H3</id>
    </interactant>
    <interactant intactId="EBI-350527">
        <id>Q15233</id>
        <label>NONO</label>
    </interactant>
    <organismsDiffer>false</organismsDiffer>
    <experiments>3</experiments>
</comment>
<comment type="interaction">
    <interactant intactId="EBI-721765">
        <id>Q9H3H3</id>
    </interactant>
    <interactant intactId="EBI-307352">
        <id>Q04864</id>
        <label>REL</label>
    </interactant>
    <organismsDiffer>false</organismsDiffer>
    <experiments>3</experiments>
</comment>
<comment type="interaction">
    <interactant intactId="EBI-721765">
        <id>Q9H3H3</id>
    </interactant>
    <interactant intactId="EBI-727004">
        <id>O00560</id>
        <label>SDCBP</label>
    </interactant>
    <organismsDiffer>false</organismsDiffer>
    <experiments>3</experiments>
</comment>
<comment type="interaction">
    <interactant intactId="EBI-12002214">
        <id>Q9H3H3-3</id>
    </interactant>
    <interactant intactId="EBI-12222405">
        <id>Q15056-2</id>
        <label>EIF4H</label>
    </interactant>
    <organismsDiffer>false</organismsDiffer>
    <experiments>8</experiments>
</comment>
<comment type="interaction">
    <interactant intactId="EBI-12002214">
        <id>Q9H3H3-3</id>
    </interactant>
    <interactant intactId="EBI-2796400">
        <id>Q9UIH9</id>
        <label>KLF15</label>
    </interactant>
    <organismsDiffer>false</organismsDiffer>
    <experiments>3</experiments>
</comment>
<comment type="interaction">
    <interactant intactId="EBI-12002214">
        <id>Q9H3H3-3</id>
    </interactant>
    <interactant intactId="EBI-16439278">
        <id>Q6FHY5</id>
        <label>MEOX2</label>
    </interactant>
    <organismsDiffer>false</organismsDiffer>
    <experiments>3</experiments>
</comment>
<comment type="interaction">
    <interactant intactId="EBI-12002214">
        <id>Q9H3H3-3</id>
    </interactant>
    <interactant intactId="EBI-350527">
        <id>Q15233</id>
        <label>NONO</label>
    </interactant>
    <organismsDiffer>false</organismsDiffer>
    <experiments>3</experiments>
</comment>
<comment type="interaction">
    <interactant intactId="EBI-12002214">
        <id>Q9H3H3-3</id>
    </interactant>
    <interactant intactId="EBI-14131832">
        <id>Q8N4B1-4</id>
        <label>PHETA1</label>
    </interactant>
    <organismsDiffer>false</organismsDiffer>
    <experiments>3</experiments>
</comment>
<comment type="interaction">
    <interactant intactId="EBI-12002214">
        <id>Q9H3H3-3</id>
    </interactant>
    <interactant intactId="EBI-10829018">
        <id>Q04864-2</id>
        <label>REL</label>
    </interactant>
    <organismsDiffer>false</organismsDiffer>
    <experiments>3</experiments>
</comment>
<comment type="interaction">
    <interactant intactId="EBI-12002214">
        <id>Q9H3H3-3</id>
    </interactant>
    <interactant intactId="EBI-727004">
        <id>O00560</id>
        <label>SDCBP</label>
    </interactant>
    <organismsDiffer>false</organismsDiffer>
    <experiments>3</experiments>
</comment>
<comment type="interaction">
    <interactant intactId="EBI-12002214">
        <id>Q9H3H3-3</id>
    </interactant>
    <interactant intactId="EBI-11119202">
        <id>Q9UL33-2</id>
        <label>TRAPPC2L</label>
    </interactant>
    <organismsDiffer>false</organismsDiffer>
    <experiments>8</experiments>
</comment>
<comment type="interaction">
    <interactant intactId="EBI-12002214">
        <id>Q9H3H3-3</id>
    </interactant>
    <interactant intactId="EBI-9089622">
        <id>Q9BYN7</id>
        <label>ZNF341</label>
    </interactant>
    <organismsDiffer>false</organismsDiffer>
    <experiments>3</experiments>
</comment>
<comment type="interaction">
    <interactant intactId="EBI-12002214">
        <id>Q9H3H3-3</id>
    </interactant>
    <interactant intactId="EBI-1049952">
        <id>Q96KM6</id>
        <label>ZNF512B</label>
    </interactant>
    <organismsDiffer>false</organismsDiffer>
    <experiments>3</experiments>
</comment>
<comment type="alternative products">
    <event type="alternative splicing"/>
    <isoform>
        <id>Q9H3H3-2</id>
        <name>2</name>
        <sequence type="displayed"/>
    </isoform>
    <isoform>
        <id>Q9H3H3-1</id>
        <name>1</name>
        <sequence type="described" ref="VSP_059970"/>
    </isoform>
    <isoform>
        <id>Q9H3H3-3</id>
        <name>3</name>
        <sequence type="described" ref="VSP_059971"/>
    </isoform>
</comment>
<comment type="miscellaneous">
    <molecule>Isoform 1</molecule>
    <text evidence="4">Dubious isoform based on intron retention.</text>
</comment>
<comment type="similarity">
    <text evidence="4">Belongs to the UPF0696 family.</text>
</comment>
<comment type="sequence caution" evidence="4">
    <conflict type="erroneous initiation">
        <sequence resource="EMBL-CDS" id="AAG43171"/>
    </conflict>
    <text>Truncated N-terminus.</text>
</comment>
<comment type="sequence caution" evidence="4">
    <conflict type="erroneous initiation">
        <sequence resource="EMBL-CDS" id="AAH13185"/>
    </conflict>
    <text>Truncated N-terminus.</text>
</comment>
<proteinExistence type="evidence at protein level"/>
<protein>
    <recommendedName>
        <fullName>UPF0696 protein C11orf68</fullName>
    </recommendedName>
    <alternativeName>
        <fullName>Basophilic leukemia-expressed protein Bles03</fullName>
    </alternativeName>
    <alternativeName>
        <fullName>Protein p5326</fullName>
    </alternativeName>
</protein>
<evidence type="ECO:0000256" key="1">
    <source>
        <dbReference type="SAM" id="MobiDB-lite"/>
    </source>
</evidence>
<evidence type="ECO:0000269" key="2">
    <source>
    </source>
</evidence>
<evidence type="ECO:0000269" key="3">
    <source ref="3"/>
</evidence>
<evidence type="ECO:0000305" key="4"/>
<evidence type="ECO:0007744" key="5">
    <source>
    </source>
</evidence>
<evidence type="ECO:0007829" key="6">
    <source>
        <dbReference type="PDB" id="1ZTP"/>
    </source>
</evidence>
<dbReference type="EMBL" id="AP006287">
    <property type="status" value="NOT_ANNOTATED_CDS"/>
    <property type="molecule type" value="Genomic_DNA"/>
</dbReference>
<dbReference type="EMBL" id="BC004414">
    <property type="protein sequence ID" value="AAH04414.1"/>
    <property type="molecule type" value="mRNA"/>
</dbReference>
<dbReference type="EMBL" id="BC010512">
    <property type="protein sequence ID" value="AAH10512.1"/>
    <property type="molecule type" value="mRNA"/>
</dbReference>
<dbReference type="EMBL" id="BC013185">
    <property type="protein sequence ID" value="AAH13185.1"/>
    <property type="status" value="ALT_INIT"/>
    <property type="molecule type" value="mRNA"/>
</dbReference>
<dbReference type="EMBL" id="CX787057">
    <property type="status" value="NOT_ANNOTATED_CDS"/>
    <property type="molecule type" value="mRNA"/>
</dbReference>
<dbReference type="EMBL" id="AF073483">
    <property type="protein sequence ID" value="AAG43171.1"/>
    <property type="status" value="ALT_INIT"/>
    <property type="molecule type" value="mRNA"/>
</dbReference>
<dbReference type="CCDS" id="CCDS44652.1">
    <molecule id="Q9H3H3-3"/>
</dbReference>
<dbReference type="CCDS" id="CCDS8122.2">
    <molecule id="Q9H3H3-2"/>
</dbReference>
<dbReference type="RefSeq" id="NP_001129107.1">
    <molecule id="Q9H3H3-3"/>
    <property type="nucleotide sequence ID" value="NM_001135635.2"/>
</dbReference>
<dbReference type="RefSeq" id="NP_113638.2">
    <molecule id="Q9H3H3-2"/>
    <property type="nucleotide sequence ID" value="NM_031450.4"/>
</dbReference>
<dbReference type="PDB" id="1ZTP">
    <property type="method" value="X-ray"/>
    <property type="resolution" value="2.50 A"/>
    <property type="chains" value="A/B/C=42-292"/>
</dbReference>
<dbReference type="PDB" id="2Q4K">
    <property type="method" value="X-ray"/>
    <property type="resolution" value="2.50 A"/>
    <property type="chains" value="A/B/C=42-292"/>
</dbReference>
<dbReference type="PDBsum" id="1ZTP"/>
<dbReference type="PDBsum" id="2Q4K"/>
<dbReference type="SMR" id="Q9H3H3"/>
<dbReference type="BioGRID" id="123702">
    <property type="interactions" value="20"/>
</dbReference>
<dbReference type="FunCoup" id="Q9H3H3">
    <property type="interactions" value="952"/>
</dbReference>
<dbReference type="IntAct" id="Q9H3H3">
    <property type="interactions" value="15"/>
</dbReference>
<dbReference type="MINT" id="Q9H3H3"/>
<dbReference type="STRING" id="9606.ENSP00000398350"/>
<dbReference type="GlyGen" id="Q9H3H3">
    <property type="glycosylation" value="2 sites, 1 O-linked glycan (1 site)"/>
</dbReference>
<dbReference type="iPTMnet" id="Q9H3H3"/>
<dbReference type="PhosphoSitePlus" id="Q9H3H3"/>
<dbReference type="BioMuta" id="C11orf68"/>
<dbReference type="DMDM" id="325511329"/>
<dbReference type="jPOST" id="Q9H3H3"/>
<dbReference type="MassIVE" id="Q9H3H3"/>
<dbReference type="PaxDb" id="9606-ENSP00000398350"/>
<dbReference type="PeptideAtlas" id="Q9H3H3"/>
<dbReference type="ProteomicsDB" id="80714">
    <molecule id="Q9H3H3-1"/>
</dbReference>
<dbReference type="ProteomicsDB" id="80715">
    <molecule id="Q9H3H3-2"/>
</dbReference>
<dbReference type="ProteomicsDB" id="80716">
    <molecule id="Q9H3H3-3"/>
</dbReference>
<dbReference type="Pumba" id="Q9H3H3"/>
<dbReference type="Antibodypedia" id="51800">
    <property type="antibodies" value="42 antibodies from 12 providers"/>
</dbReference>
<dbReference type="DNASU" id="83638"/>
<dbReference type="Ensembl" id="ENST00000438576.3">
    <molecule id="Q9H3H3-3"/>
    <property type="protein sequence ID" value="ENSP00000398350.2"/>
    <property type="gene ID" value="ENSG00000175573.7"/>
</dbReference>
<dbReference type="Ensembl" id="ENST00000449692.3">
    <molecule id="Q9H3H3-2"/>
    <property type="protein sequence ID" value="ENSP00000409681.3"/>
    <property type="gene ID" value="ENSG00000175573.7"/>
</dbReference>
<dbReference type="Ensembl" id="ENST00000530188.1">
    <molecule id="Q9H3H3-1"/>
    <property type="protein sequence ID" value="ENSP00000433914.1"/>
    <property type="gene ID" value="ENSG00000175573.7"/>
</dbReference>
<dbReference type="GeneID" id="83638"/>
<dbReference type="KEGG" id="hsa:83638"/>
<dbReference type="MANE-Select" id="ENST00000438576.3">
    <molecule id="Q9H3H3-3"/>
    <property type="protein sequence ID" value="ENSP00000398350.2"/>
    <property type="RefSeq nucleotide sequence ID" value="NM_001135635.2"/>
    <property type="RefSeq protein sequence ID" value="NP_001129107.1"/>
</dbReference>
<dbReference type="UCSC" id="uc001ogi.4">
    <molecule id="Q9H3H3-2"/>
    <property type="organism name" value="human"/>
</dbReference>
<dbReference type="AGR" id="HGNC:28801"/>
<dbReference type="CTD" id="83638"/>
<dbReference type="GeneCards" id="C11orf68"/>
<dbReference type="HGNC" id="HGNC:28801">
    <property type="gene designation" value="C11orf68"/>
</dbReference>
<dbReference type="HPA" id="ENSG00000175573">
    <property type="expression patterns" value="Low tissue specificity"/>
</dbReference>
<dbReference type="neXtProt" id="NX_Q9H3H3"/>
<dbReference type="OpenTargets" id="ENSG00000175573"/>
<dbReference type="PharmGKB" id="PA144596487"/>
<dbReference type="VEuPathDB" id="HostDB:ENSG00000175573"/>
<dbReference type="eggNOG" id="ENOG502QRQJ">
    <property type="taxonomic scope" value="Eukaryota"/>
</dbReference>
<dbReference type="GeneTree" id="ENSGT00390000011640"/>
<dbReference type="HOGENOM" id="CLU_051869_1_0_1"/>
<dbReference type="InParanoid" id="Q9H3H3"/>
<dbReference type="OMA" id="WIAIYGP"/>
<dbReference type="OrthoDB" id="10067381at2759"/>
<dbReference type="PAN-GO" id="Q9H3H3">
    <property type="GO annotations" value="0 GO annotations based on evolutionary models"/>
</dbReference>
<dbReference type="PhylomeDB" id="Q9H3H3"/>
<dbReference type="TreeFam" id="TF331797"/>
<dbReference type="PathwayCommons" id="Q9H3H3"/>
<dbReference type="SignaLink" id="Q9H3H3"/>
<dbReference type="BioGRID-ORCS" id="83638">
    <property type="hits" value="20 hits in 1135 CRISPR screens"/>
</dbReference>
<dbReference type="ChiTaRS" id="C11orf68">
    <property type="organism name" value="human"/>
</dbReference>
<dbReference type="EvolutionaryTrace" id="Q9H3H3"/>
<dbReference type="GenomeRNAi" id="83638"/>
<dbReference type="Pharos" id="Q9H3H3">
    <property type="development level" value="Tdark"/>
</dbReference>
<dbReference type="PRO" id="PR:Q9H3H3"/>
<dbReference type="Proteomes" id="UP000005640">
    <property type="component" value="Chromosome 11"/>
</dbReference>
<dbReference type="RNAct" id="Q9H3H3">
    <property type="molecule type" value="protein"/>
</dbReference>
<dbReference type="Bgee" id="ENSG00000175573">
    <property type="expression patterns" value="Expressed in right hemisphere of cerebellum and 199 other cell types or tissues"/>
</dbReference>
<dbReference type="GO" id="GO:0003723">
    <property type="term" value="F:RNA binding"/>
    <property type="evidence" value="ECO:0007005"/>
    <property type="project" value="UniProtKB"/>
</dbReference>
<dbReference type="FunFam" id="3.30.760.10:FF:000005">
    <property type="entry name" value="UPF0696 protein C11orf68 homolog"/>
    <property type="match status" value="1"/>
</dbReference>
<dbReference type="Gene3D" id="3.30.760.10">
    <property type="entry name" value="RNA Cap, Translation Initiation Factor Eif4e"/>
    <property type="match status" value="1"/>
</dbReference>
<dbReference type="InterPro" id="IPR015034">
    <property type="entry name" value="Bles03"/>
</dbReference>
<dbReference type="InterPro" id="IPR023398">
    <property type="entry name" value="TIF_eIF4e-like"/>
</dbReference>
<dbReference type="PANTHER" id="PTHR31977">
    <property type="entry name" value="UPF0696 PROTEIN C11ORF68"/>
    <property type="match status" value="1"/>
</dbReference>
<dbReference type="PANTHER" id="PTHR31977:SF1">
    <property type="entry name" value="UPF0696 PROTEIN C11ORF68"/>
    <property type="match status" value="1"/>
</dbReference>
<dbReference type="Pfam" id="PF08939">
    <property type="entry name" value="Bles03"/>
    <property type="match status" value="1"/>
</dbReference>
<dbReference type="SUPFAM" id="SSF55418">
    <property type="entry name" value="eIF4e-like"/>
    <property type="match status" value="1"/>
</dbReference>
<accession>Q9H3H3</accession>
<accession>J3KQG9</accession>
<accession>Q9BT13</accession>
<gene>
    <name type="primary">C11orf68</name>
    <name type="synonym">BLES03</name>
</gene>
<keyword id="KW-0002">3D-structure</keyword>
<keyword id="KW-0025">Alternative splicing</keyword>
<keyword id="KW-0488">Methylation</keyword>
<keyword id="KW-1267">Proteomics identification</keyword>
<keyword id="KW-1185">Reference proteome</keyword>
<organism>
    <name type="scientific">Homo sapiens</name>
    <name type="common">Human</name>
    <dbReference type="NCBI Taxonomy" id="9606"/>
    <lineage>
        <taxon>Eukaryota</taxon>
        <taxon>Metazoa</taxon>
        <taxon>Chordata</taxon>
        <taxon>Craniata</taxon>
        <taxon>Vertebrata</taxon>
        <taxon>Euteleostomi</taxon>
        <taxon>Mammalia</taxon>
        <taxon>Eutheria</taxon>
        <taxon>Euarchontoglires</taxon>
        <taxon>Primates</taxon>
        <taxon>Haplorrhini</taxon>
        <taxon>Catarrhini</taxon>
        <taxon>Hominidae</taxon>
        <taxon>Homo</taxon>
    </lineage>
</organism>
<sequence length="292" mass="31430">MAAAAAAAVAGVGRGGGGAEPRQERSRARGWAGVERSEGRRMEPGEELEEEGSPGGREDGFTAEHLAAEAMAADMDPWLVFDARTTPATELDAWLAKYPPSQVTRYGDPGSPNSEPVGWIAVYGQGYSPNSGDVQGLQAAWEALQTSGRPITPGTLRQLAITHHVLSGKWLMHLAPGFKLDHAWAGIARAVVEGQLQVAKVSPRAKEGGRQVICVYTDDFTDRLGVLEADSAIRAAGIKCLLTYKPDVYTYLGIYRANRWHLCPTLYESRFQLGGSARGSRVLDRANNVELT</sequence>
<feature type="chain" id="PRO_0000228117" description="UPF0696 protein C11orf68">
    <location>
        <begin position="1"/>
        <end position="292"/>
    </location>
</feature>
<feature type="region of interest" description="Disordered" evidence="1">
    <location>
        <begin position="1"/>
        <end position="60"/>
    </location>
</feature>
<feature type="compositionally biased region" description="Low complexity" evidence="1">
    <location>
        <begin position="1"/>
        <end position="11"/>
    </location>
</feature>
<feature type="compositionally biased region" description="Basic and acidic residues" evidence="1">
    <location>
        <begin position="35"/>
        <end position="44"/>
    </location>
</feature>
<feature type="modified residue" description="Omega-N-methylarginine" evidence="5">
    <location>
        <position position="29"/>
    </location>
</feature>
<feature type="splice variant" id="VSP_059970" description="In isoform 1.">
    <location>
        <begin position="1"/>
        <end position="41"/>
    </location>
</feature>
<feature type="splice variant" id="VSP_059971" description="In isoform 3.">
    <original>R</original>
    <variation>RS</variation>
    <location>
        <position position="40"/>
    </location>
</feature>
<feature type="sequence variant" id="VAR_060319" description="In dbSNP:rs7947504." evidence="2 3">
    <original>Q</original>
    <variation>R</variation>
    <location>
        <position position="195"/>
    </location>
</feature>
<feature type="helix" evidence="6">
    <location>
        <begin position="59"/>
        <end position="61"/>
    </location>
</feature>
<feature type="helix" evidence="6">
    <location>
        <begin position="63"/>
        <end position="69"/>
    </location>
</feature>
<feature type="strand" evidence="6">
    <location>
        <begin position="79"/>
        <end position="82"/>
    </location>
</feature>
<feature type="turn" evidence="6">
    <location>
        <begin position="83"/>
        <end position="85"/>
    </location>
</feature>
<feature type="helix" evidence="6">
    <location>
        <begin position="88"/>
        <end position="90"/>
    </location>
</feature>
<feature type="helix" evidence="6">
    <location>
        <begin position="91"/>
        <end position="97"/>
    </location>
</feature>
<feature type="turn" evidence="6">
    <location>
        <begin position="100"/>
        <end position="102"/>
    </location>
</feature>
<feature type="strand" evidence="6">
    <location>
        <begin position="120"/>
        <end position="123"/>
    </location>
</feature>
<feature type="helix" evidence="6">
    <location>
        <begin position="134"/>
        <end position="147"/>
    </location>
</feature>
<feature type="helix" evidence="6">
    <location>
        <begin position="153"/>
        <end position="163"/>
    </location>
</feature>
<feature type="strand" evidence="6">
    <location>
        <begin position="168"/>
        <end position="174"/>
    </location>
</feature>
<feature type="helix" evidence="6">
    <location>
        <begin position="178"/>
        <end position="192"/>
    </location>
</feature>
<feature type="strand" evidence="6">
    <location>
        <begin position="197"/>
        <end position="201"/>
    </location>
</feature>
<feature type="strand" evidence="6">
    <location>
        <begin position="206"/>
        <end position="208"/>
    </location>
</feature>
<feature type="strand" evidence="6">
    <location>
        <begin position="211"/>
        <end position="218"/>
    </location>
</feature>
<feature type="helix" evidence="6">
    <location>
        <begin position="223"/>
        <end position="235"/>
    </location>
</feature>
<feature type="strand" evidence="6">
    <location>
        <begin position="242"/>
        <end position="246"/>
    </location>
</feature>
<feature type="helix" evidence="6">
    <location>
        <begin position="247"/>
        <end position="251"/>
    </location>
</feature>
<feature type="strand" evidence="6">
    <location>
        <begin position="266"/>
        <end position="271"/>
    </location>
</feature>
<feature type="strand" evidence="6">
    <location>
        <begin position="274"/>
        <end position="277"/>
    </location>
</feature>
<feature type="strand" evidence="6">
    <location>
        <begin position="280"/>
        <end position="284"/>
    </location>
</feature>
<feature type="turn" evidence="6">
    <location>
        <begin position="285"/>
        <end position="288"/>
    </location>
</feature>
<name>CK068_HUMAN</name>